<accession>P17598</accession>
<reference key="1">
    <citation type="journal article" date="1990" name="Biochim. Biophys. Acta">
        <title>Characterization of a cDNA encoding cottonseed catalase.</title>
        <authorList>
            <person name="Ni W."/>
            <person name="Turley R.B."/>
            <person name="Trelease R.N."/>
        </authorList>
    </citation>
    <scope>NUCLEOTIDE SEQUENCE [MRNA]</scope>
    <source>
        <strain>cv. Deltapine 62</strain>
        <tissue>Cotyledon</tissue>
    </source>
</reference>
<sequence>MDPYKHRPSSAFNSPFWTTNSGAPVWNNNSSLTVGPRGQYLLEDYHLVEKLANFDRERIPERVVHARGASAKGFFEVTHDISHLTCADFLRAPGVQTPVIVRFSTVIHERGSPETLRDPRGFAVKFYTREGNFDLVGNNFPVFFIRDGMKFPDMVHALKPNPKSHIQENWRILDFFSHHPESLHMFTFLFDDLGVPQDYRHMEGSGVNTYTLINKAGKAHYVKFHWKPTCGVKCLLEDEAIKVGGANHSHATQDLYDSIAAGNYPEWKLFIQTIDPDHEDKFDFDPLDVTKTWPEDILPLQPVGRLVLNKNIDNFFAENEQLAFCPAIVVPGIYYSDDKLLQTRIFSYSDTQRHRLGPNYLQLPANAPKCAHHNNHHEGFMNFMHRDEEINYFPSRYDPVRHAEMFPIPPAVCTGRREKCIIEKENNFKQPGERYRSWAADRQERFICRWVDALSDPRVTHEIRSIWISYWSQADKSVGQKLASLLNVRPSI</sequence>
<feature type="chain" id="PRO_0000084938" description="Catalase isozyme 1">
    <location>
        <begin position="1"/>
        <end position="492"/>
    </location>
</feature>
<feature type="active site" evidence="2">
    <location>
        <position position="65"/>
    </location>
</feature>
<feature type="active site" evidence="2">
    <location>
        <position position="138"/>
    </location>
</feature>
<feature type="binding site" description="axial binding residue" evidence="1">
    <location>
        <position position="348"/>
    </location>
    <ligand>
        <name>heme</name>
        <dbReference type="ChEBI" id="CHEBI:30413"/>
    </ligand>
    <ligandPart>
        <name>Fe</name>
        <dbReference type="ChEBI" id="CHEBI:18248"/>
    </ligandPart>
</feature>
<name>CATA1_GOSHI</name>
<keyword id="KW-0349">Heme</keyword>
<keyword id="KW-0376">Hydrogen peroxide</keyword>
<keyword id="KW-0408">Iron</keyword>
<keyword id="KW-0479">Metal-binding</keyword>
<keyword id="KW-0560">Oxidoreductase</keyword>
<keyword id="KW-0575">Peroxidase</keyword>
<keyword id="KW-0576">Peroxisome</keyword>
<keyword id="KW-1185">Reference proteome</keyword>
<organism>
    <name type="scientific">Gossypium hirsutum</name>
    <name type="common">Upland cotton</name>
    <name type="synonym">Gossypium mexicanum</name>
    <dbReference type="NCBI Taxonomy" id="3635"/>
    <lineage>
        <taxon>Eukaryota</taxon>
        <taxon>Viridiplantae</taxon>
        <taxon>Streptophyta</taxon>
        <taxon>Embryophyta</taxon>
        <taxon>Tracheophyta</taxon>
        <taxon>Spermatophyta</taxon>
        <taxon>Magnoliopsida</taxon>
        <taxon>eudicotyledons</taxon>
        <taxon>Gunneridae</taxon>
        <taxon>Pentapetalae</taxon>
        <taxon>rosids</taxon>
        <taxon>malvids</taxon>
        <taxon>Malvales</taxon>
        <taxon>Malvaceae</taxon>
        <taxon>Malvoideae</taxon>
        <taxon>Gossypium</taxon>
    </lineage>
</organism>
<proteinExistence type="evidence at transcript level"/>
<dbReference type="EC" id="1.11.1.6"/>
<dbReference type="EMBL" id="X52135">
    <property type="protein sequence ID" value="CAA36380.1"/>
    <property type="molecule type" value="mRNA"/>
</dbReference>
<dbReference type="PIR" id="S10395">
    <property type="entry name" value="S10395"/>
</dbReference>
<dbReference type="PIR" id="S10770">
    <property type="entry name" value="S10770"/>
</dbReference>
<dbReference type="RefSeq" id="NP_001314123.1">
    <property type="nucleotide sequence ID" value="NM_001327194.1"/>
</dbReference>
<dbReference type="SMR" id="P17598"/>
<dbReference type="STRING" id="3635.P17598"/>
<dbReference type="PeroxiBase" id="437">
    <property type="entry name" value="GhKat01"/>
</dbReference>
<dbReference type="PaxDb" id="3635-P17598"/>
<dbReference type="GeneID" id="107922122"/>
<dbReference type="KEGG" id="ghi:107922122"/>
<dbReference type="OrthoDB" id="546at41938"/>
<dbReference type="Proteomes" id="UP000189702">
    <property type="component" value="Unplaced"/>
</dbReference>
<dbReference type="GO" id="GO:0005737">
    <property type="term" value="C:cytoplasm"/>
    <property type="evidence" value="ECO:0000318"/>
    <property type="project" value="GO_Central"/>
</dbReference>
<dbReference type="GO" id="GO:0009514">
    <property type="term" value="C:glyoxysome"/>
    <property type="evidence" value="ECO:0000304"/>
    <property type="project" value="AgBase"/>
</dbReference>
<dbReference type="GO" id="GO:0005634">
    <property type="term" value="C:nucleus"/>
    <property type="evidence" value="ECO:0000314"/>
    <property type="project" value="AgBase"/>
</dbReference>
<dbReference type="GO" id="GO:0005777">
    <property type="term" value="C:peroxisome"/>
    <property type="evidence" value="ECO:0000318"/>
    <property type="project" value="GO_Central"/>
</dbReference>
<dbReference type="GO" id="GO:0005886">
    <property type="term" value="C:plasma membrane"/>
    <property type="evidence" value="ECO:0000318"/>
    <property type="project" value="GO_Central"/>
</dbReference>
<dbReference type="GO" id="GO:0004096">
    <property type="term" value="F:catalase activity"/>
    <property type="evidence" value="ECO:0000314"/>
    <property type="project" value="AgBase"/>
</dbReference>
<dbReference type="GO" id="GO:0020037">
    <property type="term" value="F:heme binding"/>
    <property type="evidence" value="ECO:0000318"/>
    <property type="project" value="GO_Central"/>
</dbReference>
<dbReference type="GO" id="GO:0046872">
    <property type="term" value="F:metal ion binding"/>
    <property type="evidence" value="ECO:0007669"/>
    <property type="project" value="UniProtKB-KW"/>
</dbReference>
<dbReference type="GO" id="GO:0042744">
    <property type="term" value="P:hydrogen peroxide catabolic process"/>
    <property type="evidence" value="ECO:0000318"/>
    <property type="project" value="GO_Central"/>
</dbReference>
<dbReference type="GO" id="GO:0042542">
    <property type="term" value="P:response to hydrogen peroxide"/>
    <property type="evidence" value="ECO:0000318"/>
    <property type="project" value="GO_Central"/>
</dbReference>
<dbReference type="GO" id="GO:0009845">
    <property type="term" value="P:seed germination"/>
    <property type="evidence" value="ECO:0000314"/>
    <property type="project" value="AgBase"/>
</dbReference>
<dbReference type="CDD" id="cd08154">
    <property type="entry name" value="catalase_clade_1"/>
    <property type="match status" value="1"/>
</dbReference>
<dbReference type="FunFam" id="2.40.180.10:FF:000002">
    <property type="entry name" value="Catalase"/>
    <property type="match status" value="1"/>
</dbReference>
<dbReference type="Gene3D" id="2.40.180.10">
    <property type="entry name" value="Catalase core domain"/>
    <property type="match status" value="1"/>
</dbReference>
<dbReference type="InterPro" id="IPR018028">
    <property type="entry name" value="Catalase"/>
</dbReference>
<dbReference type="InterPro" id="IPR024708">
    <property type="entry name" value="Catalase_AS"/>
</dbReference>
<dbReference type="InterPro" id="IPR024711">
    <property type="entry name" value="Catalase_clade1/3"/>
</dbReference>
<dbReference type="InterPro" id="IPR011614">
    <property type="entry name" value="Catalase_core"/>
</dbReference>
<dbReference type="InterPro" id="IPR002226">
    <property type="entry name" value="Catalase_haem_BS"/>
</dbReference>
<dbReference type="InterPro" id="IPR010582">
    <property type="entry name" value="Catalase_immune_responsive"/>
</dbReference>
<dbReference type="InterPro" id="IPR020835">
    <property type="entry name" value="Catalase_sf"/>
</dbReference>
<dbReference type="PANTHER" id="PTHR11465">
    <property type="entry name" value="CATALASE"/>
    <property type="match status" value="1"/>
</dbReference>
<dbReference type="PANTHER" id="PTHR11465:SF23">
    <property type="entry name" value="CATALASE-2"/>
    <property type="match status" value="1"/>
</dbReference>
<dbReference type="Pfam" id="PF00199">
    <property type="entry name" value="Catalase"/>
    <property type="match status" value="1"/>
</dbReference>
<dbReference type="Pfam" id="PF06628">
    <property type="entry name" value="Catalase-rel"/>
    <property type="match status" value="1"/>
</dbReference>
<dbReference type="PIRSF" id="PIRSF038928">
    <property type="entry name" value="Catalase_clade1-3"/>
    <property type="match status" value="1"/>
</dbReference>
<dbReference type="PRINTS" id="PR00067">
    <property type="entry name" value="CATALASE"/>
</dbReference>
<dbReference type="SMART" id="SM01060">
    <property type="entry name" value="Catalase"/>
    <property type="match status" value="1"/>
</dbReference>
<dbReference type="SUPFAM" id="SSF56634">
    <property type="entry name" value="Heme-dependent catalase-like"/>
    <property type="match status" value="1"/>
</dbReference>
<dbReference type="PROSITE" id="PS00437">
    <property type="entry name" value="CATALASE_1"/>
    <property type="match status" value="1"/>
</dbReference>
<dbReference type="PROSITE" id="PS00438">
    <property type="entry name" value="CATALASE_2"/>
    <property type="match status" value="1"/>
</dbReference>
<dbReference type="PROSITE" id="PS51402">
    <property type="entry name" value="CATALASE_3"/>
    <property type="match status" value="1"/>
</dbReference>
<gene>
    <name type="primary">CAT1</name>
    <name type="synonym">SU1</name>
</gene>
<evidence type="ECO:0000250" key="1"/>
<evidence type="ECO:0000255" key="2">
    <source>
        <dbReference type="PROSITE-ProRule" id="PRU10013"/>
    </source>
</evidence>
<evidence type="ECO:0000305" key="3"/>
<protein>
    <recommendedName>
        <fullName>Catalase isozyme 1</fullName>
        <ecNumber>1.11.1.6</ecNumber>
    </recommendedName>
</protein>
<comment type="function">
    <text>Occurs in almost all aerobically respiring organisms and serves to protect cells from the toxic effects of hydrogen peroxide.</text>
</comment>
<comment type="catalytic activity">
    <reaction evidence="2">
        <text>2 H2O2 = O2 + 2 H2O</text>
        <dbReference type="Rhea" id="RHEA:20309"/>
        <dbReference type="ChEBI" id="CHEBI:15377"/>
        <dbReference type="ChEBI" id="CHEBI:15379"/>
        <dbReference type="ChEBI" id="CHEBI:16240"/>
        <dbReference type="EC" id="1.11.1.6"/>
    </reaction>
</comment>
<comment type="cofactor">
    <cofactor>
        <name>heme</name>
        <dbReference type="ChEBI" id="CHEBI:30413"/>
    </cofactor>
</comment>
<comment type="subunit">
    <text>Homotetramer.</text>
</comment>
<comment type="subcellular location">
    <subcellularLocation>
        <location>Peroxisome</location>
    </subcellularLocation>
</comment>
<comment type="miscellaneous">
    <text>There are at least five isozymes of catalase in cotton.</text>
</comment>
<comment type="similarity">
    <text evidence="3">Belongs to the catalase family.</text>
</comment>